<comment type="function">
    <text evidence="1">Forms part of the ribosomal stalk which helps the ribosome interact with GTP-bound translation factors. Is thus essential for accurate translation.</text>
</comment>
<comment type="subunit">
    <text evidence="1">Homodimer. Part of the ribosomal stalk of the 50S ribosomal subunit. Forms a multimeric L10(L12)X complex, where L10 forms an elongated spine to which 2 to 4 L12 dimers bind in a sequential fashion. Binds GTP-bound translation factors.</text>
</comment>
<comment type="similarity">
    <text evidence="1">Belongs to the bacterial ribosomal protein bL12 family.</text>
</comment>
<proteinExistence type="inferred from homology"/>
<protein>
    <recommendedName>
        <fullName evidence="1">Large ribosomal subunit protein bL12</fullName>
    </recommendedName>
    <alternativeName>
        <fullName evidence="2">50S ribosomal protein L7/L12</fullName>
    </alternativeName>
</protein>
<evidence type="ECO:0000255" key="1">
    <source>
        <dbReference type="HAMAP-Rule" id="MF_00368"/>
    </source>
</evidence>
<evidence type="ECO:0000305" key="2"/>
<name>RL7_RICFE</name>
<accession>Q4UKD3</accession>
<dbReference type="EMBL" id="CP000053">
    <property type="protein sequence ID" value="AAY61998.1"/>
    <property type="molecule type" value="Genomic_DNA"/>
</dbReference>
<dbReference type="SMR" id="Q4UKD3"/>
<dbReference type="STRING" id="315456.RF_1147"/>
<dbReference type="KEGG" id="rfe:RF_1147"/>
<dbReference type="eggNOG" id="COG0222">
    <property type="taxonomic scope" value="Bacteria"/>
</dbReference>
<dbReference type="HOGENOM" id="CLU_086499_3_2_5"/>
<dbReference type="OrthoDB" id="9811748at2"/>
<dbReference type="Proteomes" id="UP000008548">
    <property type="component" value="Chromosome"/>
</dbReference>
<dbReference type="GO" id="GO:0005737">
    <property type="term" value="C:cytoplasm"/>
    <property type="evidence" value="ECO:0007669"/>
    <property type="project" value="UniProtKB-ARBA"/>
</dbReference>
<dbReference type="GO" id="GO:1990904">
    <property type="term" value="C:ribonucleoprotein complex"/>
    <property type="evidence" value="ECO:0007669"/>
    <property type="project" value="UniProtKB-KW"/>
</dbReference>
<dbReference type="GO" id="GO:0005840">
    <property type="term" value="C:ribosome"/>
    <property type="evidence" value="ECO:0007669"/>
    <property type="project" value="UniProtKB-KW"/>
</dbReference>
<dbReference type="GO" id="GO:0003729">
    <property type="term" value="F:mRNA binding"/>
    <property type="evidence" value="ECO:0007669"/>
    <property type="project" value="TreeGrafter"/>
</dbReference>
<dbReference type="GO" id="GO:0003735">
    <property type="term" value="F:structural constituent of ribosome"/>
    <property type="evidence" value="ECO:0007669"/>
    <property type="project" value="InterPro"/>
</dbReference>
<dbReference type="GO" id="GO:0006412">
    <property type="term" value="P:translation"/>
    <property type="evidence" value="ECO:0007669"/>
    <property type="project" value="UniProtKB-UniRule"/>
</dbReference>
<dbReference type="CDD" id="cd00387">
    <property type="entry name" value="Ribosomal_L7_L12"/>
    <property type="match status" value="1"/>
</dbReference>
<dbReference type="FunFam" id="1.20.5.710:FF:000007">
    <property type="entry name" value="50S ribosomal protein L7/L12"/>
    <property type="match status" value="1"/>
</dbReference>
<dbReference type="FunFam" id="3.30.1390.10:FF:000001">
    <property type="entry name" value="50S ribosomal protein L7/L12"/>
    <property type="match status" value="1"/>
</dbReference>
<dbReference type="Gene3D" id="3.30.1390.10">
    <property type="match status" value="1"/>
</dbReference>
<dbReference type="Gene3D" id="1.20.5.710">
    <property type="entry name" value="Single helix bin"/>
    <property type="match status" value="1"/>
</dbReference>
<dbReference type="HAMAP" id="MF_00368">
    <property type="entry name" value="Ribosomal_bL12"/>
    <property type="match status" value="1"/>
</dbReference>
<dbReference type="InterPro" id="IPR000206">
    <property type="entry name" value="Ribosomal_bL12"/>
</dbReference>
<dbReference type="InterPro" id="IPR013823">
    <property type="entry name" value="Ribosomal_bL12_C"/>
</dbReference>
<dbReference type="InterPro" id="IPR014719">
    <property type="entry name" value="Ribosomal_bL12_C/ClpS-like"/>
</dbReference>
<dbReference type="InterPro" id="IPR008932">
    <property type="entry name" value="Ribosomal_bL12_oligo"/>
</dbReference>
<dbReference type="InterPro" id="IPR036235">
    <property type="entry name" value="Ribosomal_bL12_oligo_N_sf"/>
</dbReference>
<dbReference type="NCBIfam" id="TIGR00855">
    <property type="entry name" value="L12"/>
    <property type="match status" value="1"/>
</dbReference>
<dbReference type="PANTHER" id="PTHR45987">
    <property type="entry name" value="39S RIBOSOMAL PROTEIN L12"/>
    <property type="match status" value="1"/>
</dbReference>
<dbReference type="PANTHER" id="PTHR45987:SF4">
    <property type="entry name" value="LARGE RIBOSOMAL SUBUNIT PROTEIN BL12M"/>
    <property type="match status" value="1"/>
</dbReference>
<dbReference type="Pfam" id="PF00542">
    <property type="entry name" value="Ribosomal_L12"/>
    <property type="match status" value="1"/>
</dbReference>
<dbReference type="Pfam" id="PF16320">
    <property type="entry name" value="Ribosomal_L12_N"/>
    <property type="match status" value="1"/>
</dbReference>
<dbReference type="SUPFAM" id="SSF54736">
    <property type="entry name" value="ClpS-like"/>
    <property type="match status" value="1"/>
</dbReference>
<dbReference type="SUPFAM" id="SSF48300">
    <property type="entry name" value="Ribosomal protein L7/12, oligomerisation (N-terminal) domain"/>
    <property type="match status" value="1"/>
</dbReference>
<sequence length="125" mass="12996">MADLAKIEEQLSSLTLMQAAELVKMLEEKWGVSAAAPVAVAAAGAAAPAAEAAAEKTEFEIVLMAAGDKKVEVIKVVKDITGLGLIEAKKLVDEAPKPMKSNVKKAEAEEIKGKLEAAGAKVELK</sequence>
<reference key="1">
    <citation type="journal article" date="2005" name="PLoS Biol.">
        <title>The genome sequence of Rickettsia felis identifies the first putative conjugative plasmid in an obligate intracellular parasite.</title>
        <authorList>
            <person name="Ogata H."/>
            <person name="Renesto P."/>
            <person name="Audic S."/>
            <person name="Robert C."/>
            <person name="Blanc G."/>
            <person name="Fournier P.-E."/>
            <person name="Parinello H."/>
            <person name="Claverie J.-M."/>
            <person name="Raoult D."/>
        </authorList>
    </citation>
    <scope>NUCLEOTIDE SEQUENCE [LARGE SCALE GENOMIC DNA]</scope>
    <source>
        <strain>ATCC VR-1525 / URRWXCal2</strain>
    </source>
</reference>
<gene>
    <name evidence="1" type="primary">rplL</name>
    <name type="ordered locus">RF_1147</name>
</gene>
<organism>
    <name type="scientific">Rickettsia felis (strain ATCC VR-1525 / URRWXCal2)</name>
    <name type="common">Rickettsia azadi</name>
    <dbReference type="NCBI Taxonomy" id="315456"/>
    <lineage>
        <taxon>Bacteria</taxon>
        <taxon>Pseudomonadati</taxon>
        <taxon>Pseudomonadota</taxon>
        <taxon>Alphaproteobacteria</taxon>
        <taxon>Rickettsiales</taxon>
        <taxon>Rickettsiaceae</taxon>
        <taxon>Rickettsieae</taxon>
        <taxon>Rickettsia</taxon>
        <taxon>spotted fever group</taxon>
    </lineage>
</organism>
<keyword id="KW-0687">Ribonucleoprotein</keyword>
<keyword id="KW-0689">Ribosomal protein</keyword>
<feature type="chain" id="PRO_0000243486" description="Large ribosomal subunit protein bL12">
    <location>
        <begin position="1"/>
        <end position="125"/>
    </location>
</feature>